<accession>Q1GS53</accession>
<sequence length="216" mass="23094">MKFFADTAEIDAIQELAATGLLDGVTTNPSLIAKSGRDFKEVTREICAIVDGPVSAEVVALDHETMMKEAEILRKIADNVCIKVPLTIDGLKTCKKLTGDGTMVNVTLCFSATQALLAAKAGATFVSPFVGRHDDNGFDGMQLIADIRLIYDNYDFGTEILVASVRHGIHVLEAAKIGADVMTAPPAVIKGLFKHVLTEKGIEGFLADWAKTGQSI</sequence>
<name>TAL_SPHAL</name>
<dbReference type="EC" id="2.2.1.2" evidence="1"/>
<dbReference type="EMBL" id="CP000356">
    <property type="protein sequence ID" value="ABF53519.1"/>
    <property type="molecule type" value="Genomic_DNA"/>
</dbReference>
<dbReference type="RefSeq" id="WP_011542097.1">
    <property type="nucleotide sequence ID" value="NC_008048.1"/>
</dbReference>
<dbReference type="SMR" id="Q1GS53"/>
<dbReference type="STRING" id="317655.Sala_1807"/>
<dbReference type="KEGG" id="sal:Sala_1807"/>
<dbReference type="eggNOG" id="COG0176">
    <property type="taxonomic scope" value="Bacteria"/>
</dbReference>
<dbReference type="HOGENOM" id="CLU_079764_0_0_5"/>
<dbReference type="OrthoDB" id="9807051at2"/>
<dbReference type="UniPathway" id="UPA00115">
    <property type="reaction ID" value="UER00414"/>
</dbReference>
<dbReference type="Proteomes" id="UP000006578">
    <property type="component" value="Chromosome"/>
</dbReference>
<dbReference type="GO" id="GO:0005737">
    <property type="term" value="C:cytoplasm"/>
    <property type="evidence" value="ECO:0007669"/>
    <property type="project" value="UniProtKB-SubCell"/>
</dbReference>
<dbReference type="GO" id="GO:0016832">
    <property type="term" value="F:aldehyde-lyase activity"/>
    <property type="evidence" value="ECO:0007669"/>
    <property type="project" value="InterPro"/>
</dbReference>
<dbReference type="GO" id="GO:0004801">
    <property type="term" value="F:transaldolase activity"/>
    <property type="evidence" value="ECO:0007669"/>
    <property type="project" value="UniProtKB-UniRule"/>
</dbReference>
<dbReference type="GO" id="GO:0005975">
    <property type="term" value="P:carbohydrate metabolic process"/>
    <property type="evidence" value="ECO:0007669"/>
    <property type="project" value="InterPro"/>
</dbReference>
<dbReference type="GO" id="GO:0006098">
    <property type="term" value="P:pentose-phosphate shunt"/>
    <property type="evidence" value="ECO:0007669"/>
    <property type="project" value="UniProtKB-UniRule"/>
</dbReference>
<dbReference type="CDD" id="cd00956">
    <property type="entry name" value="Transaldolase_FSA"/>
    <property type="match status" value="1"/>
</dbReference>
<dbReference type="FunFam" id="3.20.20.70:FF:000018">
    <property type="entry name" value="Probable transaldolase"/>
    <property type="match status" value="1"/>
</dbReference>
<dbReference type="Gene3D" id="3.20.20.70">
    <property type="entry name" value="Aldolase class I"/>
    <property type="match status" value="1"/>
</dbReference>
<dbReference type="HAMAP" id="MF_00494">
    <property type="entry name" value="Transaldolase_3b"/>
    <property type="match status" value="1"/>
</dbReference>
<dbReference type="InterPro" id="IPR013785">
    <property type="entry name" value="Aldolase_TIM"/>
</dbReference>
<dbReference type="InterPro" id="IPR001585">
    <property type="entry name" value="TAL/FSA"/>
</dbReference>
<dbReference type="InterPro" id="IPR022999">
    <property type="entry name" value="Transaldolase_3B"/>
</dbReference>
<dbReference type="InterPro" id="IPR004731">
    <property type="entry name" value="Transaldolase_3B/F6P_aldolase"/>
</dbReference>
<dbReference type="InterPro" id="IPR018225">
    <property type="entry name" value="Transaldolase_AS"/>
</dbReference>
<dbReference type="InterPro" id="IPR033919">
    <property type="entry name" value="TSA/FSA_arc/bac"/>
</dbReference>
<dbReference type="NCBIfam" id="TIGR00875">
    <property type="entry name" value="fsa_talC_mipB"/>
    <property type="match status" value="1"/>
</dbReference>
<dbReference type="PANTHER" id="PTHR10683:SF40">
    <property type="entry name" value="FRUCTOSE-6-PHOSPHATE ALDOLASE 1-RELATED"/>
    <property type="match status" value="1"/>
</dbReference>
<dbReference type="PANTHER" id="PTHR10683">
    <property type="entry name" value="TRANSALDOLASE"/>
    <property type="match status" value="1"/>
</dbReference>
<dbReference type="Pfam" id="PF00923">
    <property type="entry name" value="TAL_FSA"/>
    <property type="match status" value="1"/>
</dbReference>
<dbReference type="SUPFAM" id="SSF51569">
    <property type="entry name" value="Aldolase"/>
    <property type="match status" value="1"/>
</dbReference>
<dbReference type="PROSITE" id="PS01054">
    <property type="entry name" value="TRANSALDOLASE_1"/>
    <property type="match status" value="1"/>
</dbReference>
<comment type="function">
    <text evidence="1">Transaldolase is important for the balance of metabolites in the pentose-phosphate pathway.</text>
</comment>
<comment type="catalytic activity">
    <reaction evidence="1">
        <text>D-sedoheptulose 7-phosphate + D-glyceraldehyde 3-phosphate = D-erythrose 4-phosphate + beta-D-fructose 6-phosphate</text>
        <dbReference type="Rhea" id="RHEA:17053"/>
        <dbReference type="ChEBI" id="CHEBI:16897"/>
        <dbReference type="ChEBI" id="CHEBI:57483"/>
        <dbReference type="ChEBI" id="CHEBI:57634"/>
        <dbReference type="ChEBI" id="CHEBI:59776"/>
        <dbReference type="EC" id="2.2.1.2"/>
    </reaction>
</comment>
<comment type="pathway">
    <text evidence="1">Carbohydrate degradation; pentose phosphate pathway; D-glyceraldehyde 3-phosphate and beta-D-fructose 6-phosphate from D-ribose 5-phosphate and D-xylulose 5-phosphate (non-oxidative stage): step 2/3.</text>
</comment>
<comment type="subcellular location">
    <subcellularLocation>
        <location evidence="1">Cytoplasm</location>
    </subcellularLocation>
</comment>
<comment type="similarity">
    <text evidence="1">Belongs to the transaldolase family. Type 3B subfamily.</text>
</comment>
<keyword id="KW-0963">Cytoplasm</keyword>
<keyword id="KW-0570">Pentose shunt</keyword>
<keyword id="KW-1185">Reference proteome</keyword>
<keyword id="KW-0704">Schiff base</keyword>
<keyword id="KW-0808">Transferase</keyword>
<protein>
    <recommendedName>
        <fullName evidence="1">Probable transaldolase</fullName>
        <ecNumber evidence="1">2.2.1.2</ecNumber>
    </recommendedName>
</protein>
<organism>
    <name type="scientific">Sphingopyxis alaskensis (strain DSM 13593 / LMG 18877 / RB2256)</name>
    <name type="common">Sphingomonas alaskensis</name>
    <dbReference type="NCBI Taxonomy" id="317655"/>
    <lineage>
        <taxon>Bacteria</taxon>
        <taxon>Pseudomonadati</taxon>
        <taxon>Pseudomonadota</taxon>
        <taxon>Alphaproteobacteria</taxon>
        <taxon>Sphingomonadales</taxon>
        <taxon>Sphingomonadaceae</taxon>
        <taxon>Sphingopyxis</taxon>
    </lineage>
</organism>
<proteinExistence type="inferred from homology"/>
<reference key="1">
    <citation type="journal article" date="2009" name="Proc. Natl. Acad. Sci. U.S.A.">
        <title>The genomic basis of trophic strategy in marine bacteria.</title>
        <authorList>
            <person name="Lauro F.M."/>
            <person name="McDougald D."/>
            <person name="Thomas T."/>
            <person name="Williams T.J."/>
            <person name="Egan S."/>
            <person name="Rice S."/>
            <person name="DeMaere M.Z."/>
            <person name="Ting L."/>
            <person name="Ertan H."/>
            <person name="Johnson J."/>
            <person name="Ferriera S."/>
            <person name="Lapidus A."/>
            <person name="Anderson I."/>
            <person name="Kyrpides N."/>
            <person name="Munk A.C."/>
            <person name="Detter C."/>
            <person name="Han C.S."/>
            <person name="Brown M.V."/>
            <person name="Robb F.T."/>
            <person name="Kjelleberg S."/>
            <person name="Cavicchioli R."/>
        </authorList>
    </citation>
    <scope>NUCLEOTIDE SEQUENCE [LARGE SCALE GENOMIC DNA]</scope>
    <source>
        <strain>DSM 13593 / LMG 18877 / RB2256</strain>
    </source>
</reference>
<feature type="chain" id="PRO_1000126357" description="Probable transaldolase">
    <location>
        <begin position="1"/>
        <end position="216"/>
    </location>
</feature>
<feature type="active site" description="Schiff-base intermediate with substrate" evidence="1">
    <location>
        <position position="83"/>
    </location>
</feature>
<gene>
    <name evidence="1" type="primary">tal</name>
    <name type="ordered locus">Sala_1807</name>
</gene>
<evidence type="ECO:0000255" key="1">
    <source>
        <dbReference type="HAMAP-Rule" id="MF_00494"/>
    </source>
</evidence>